<protein>
    <recommendedName>
        <fullName>Imidazole glycerol phosphate synthase subunit HisF</fullName>
        <ecNumber>4.3.2.10</ecNumber>
    </recommendedName>
    <alternativeName>
        <fullName>IGP synthase cyclase subunit</fullName>
    </alternativeName>
    <alternativeName>
        <fullName>IGP synthase subunit HisF</fullName>
    </alternativeName>
    <alternativeName>
        <fullName>ImGP synthase subunit HisF</fullName>
        <shortName>IGPS subunit HisF</shortName>
    </alternativeName>
</protein>
<sequence>MLTKRIIPCLDVTAGRVVKGVNFVSLTDVGDPVEIAKAYNEAGADELVFLDITATVELRQTMIDVVERTAEQVFIPLTVGGGINSVNDMKELLQAGADKISLNSAAIKRPELIQEGANKFGNQCIVVAIDAKWNGSNWHVFTRGGRDDTGLDAIEWAKKATQLGAGEILLTSMDGDGTKNGYDIPLTKAISEAVSVPVIASGGCGNASHMVEVFEQTNATAALAASIFHYGELSIKNVKTTLLEKGVNIRP</sequence>
<feature type="chain" id="PRO_0000142177" description="Imidazole glycerol phosphate synthase subunit HisF">
    <location>
        <begin position="1"/>
        <end position="251"/>
    </location>
</feature>
<feature type="active site" evidence="2">
    <location>
        <position position="11"/>
    </location>
</feature>
<feature type="active site" evidence="2">
    <location>
        <position position="130"/>
    </location>
</feature>
<keyword id="KW-0028">Amino-acid biosynthesis</keyword>
<keyword id="KW-0963">Cytoplasm</keyword>
<keyword id="KW-0368">Histidine biosynthesis</keyword>
<keyword id="KW-0456">Lyase</keyword>
<gene>
    <name type="primary">hisF</name>
    <name type="ordered locus">lin0572</name>
</gene>
<proteinExistence type="inferred from homology"/>
<name>HIS6_LISIN</name>
<dbReference type="EC" id="4.3.2.10"/>
<dbReference type="EMBL" id="AL596165">
    <property type="protein sequence ID" value="CAC95804.1"/>
    <property type="molecule type" value="Genomic_DNA"/>
</dbReference>
<dbReference type="PIR" id="AD1504">
    <property type="entry name" value="AD1504"/>
</dbReference>
<dbReference type="RefSeq" id="WP_003760706.1">
    <property type="nucleotide sequence ID" value="NC_003212.1"/>
</dbReference>
<dbReference type="SMR" id="Q92E88"/>
<dbReference type="STRING" id="272626.gene:17564898"/>
<dbReference type="GeneID" id="93234020"/>
<dbReference type="KEGG" id="lin:hisF"/>
<dbReference type="eggNOG" id="COG0107">
    <property type="taxonomic scope" value="Bacteria"/>
</dbReference>
<dbReference type="HOGENOM" id="CLU_048577_4_0_9"/>
<dbReference type="OrthoDB" id="9781903at2"/>
<dbReference type="UniPathway" id="UPA00031">
    <property type="reaction ID" value="UER00010"/>
</dbReference>
<dbReference type="Proteomes" id="UP000002513">
    <property type="component" value="Chromosome"/>
</dbReference>
<dbReference type="GO" id="GO:0005737">
    <property type="term" value="C:cytoplasm"/>
    <property type="evidence" value="ECO:0007669"/>
    <property type="project" value="UniProtKB-SubCell"/>
</dbReference>
<dbReference type="GO" id="GO:0000107">
    <property type="term" value="F:imidazoleglycerol-phosphate synthase activity"/>
    <property type="evidence" value="ECO:0007669"/>
    <property type="project" value="UniProtKB-UniRule"/>
</dbReference>
<dbReference type="GO" id="GO:0016829">
    <property type="term" value="F:lyase activity"/>
    <property type="evidence" value="ECO:0007669"/>
    <property type="project" value="UniProtKB-KW"/>
</dbReference>
<dbReference type="GO" id="GO:0000105">
    <property type="term" value="P:L-histidine biosynthetic process"/>
    <property type="evidence" value="ECO:0007669"/>
    <property type="project" value="UniProtKB-UniRule"/>
</dbReference>
<dbReference type="CDD" id="cd04731">
    <property type="entry name" value="HisF"/>
    <property type="match status" value="1"/>
</dbReference>
<dbReference type="FunFam" id="3.20.20.70:FF:000006">
    <property type="entry name" value="Imidazole glycerol phosphate synthase subunit HisF"/>
    <property type="match status" value="1"/>
</dbReference>
<dbReference type="Gene3D" id="3.20.20.70">
    <property type="entry name" value="Aldolase class I"/>
    <property type="match status" value="1"/>
</dbReference>
<dbReference type="HAMAP" id="MF_01013">
    <property type="entry name" value="HisF"/>
    <property type="match status" value="1"/>
</dbReference>
<dbReference type="InterPro" id="IPR013785">
    <property type="entry name" value="Aldolase_TIM"/>
</dbReference>
<dbReference type="InterPro" id="IPR006062">
    <property type="entry name" value="His_biosynth"/>
</dbReference>
<dbReference type="InterPro" id="IPR004651">
    <property type="entry name" value="HisF"/>
</dbReference>
<dbReference type="InterPro" id="IPR050064">
    <property type="entry name" value="IGPS_HisA/HisF"/>
</dbReference>
<dbReference type="InterPro" id="IPR011060">
    <property type="entry name" value="RibuloseP-bd_barrel"/>
</dbReference>
<dbReference type="NCBIfam" id="TIGR00735">
    <property type="entry name" value="hisF"/>
    <property type="match status" value="1"/>
</dbReference>
<dbReference type="PANTHER" id="PTHR21235:SF2">
    <property type="entry name" value="IMIDAZOLE GLYCEROL PHOSPHATE SYNTHASE HISHF"/>
    <property type="match status" value="1"/>
</dbReference>
<dbReference type="PANTHER" id="PTHR21235">
    <property type="entry name" value="IMIDAZOLE GLYCEROL PHOSPHATE SYNTHASE SUBUNIT HISF/H IGP SYNTHASE SUBUNIT HISF/H"/>
    <property type="match status" value="1"/>
</dbReference>
<dbReference type="Pfam" id="PF00977">
    <property type="entry name" value="His_biosynth"/>
    <property type="match status" value="1"/>
</dbReference>
<dbReference type="SUPFAM" id="SSF51366">
    <property type="entry name" value="Ribulose-phoshate binding barrel"/>
    <property type="match status" value="1"/>
</dbReference>
<evidence type="ECO:0000250" key="1"/>
<evidence type="ECO:0000255" key="2"/>
<evidence type="ECO:0000305" key="3"/>
<comment type="function">
    <text evidence="1">IGPS catalyzes the conversion of PRFAR and glutamine to IGP, AICAR and glutamate. The HisF subunit catalyzes the cyclization activity that produces IGP and AICAR from PRFAR using the ammonia provided by the HisH subunit (By similarity).</text>
</comment>
<comment type="catalytic activity">
    <reaction>
        <text>5-[(5-phospho-1-deoxy-D-ribulos-1-ylimino)methylamino]-1-(5-phospho-beta-D-ribosyl)imidazole-4-carboxamide + L-glutamine = D-erythro-1-(imidazol-4-yl)glycerol 3-phosphate + 5-amino-1-(5-phospho-beta-D-ribosyl)imidazole-4-carboxamide + L-glutamate + H(+)</text>
        <dbReference type="Rhea" id="RHEA:24793"/>
        <dbReference type="ChEBI" id="CHEBI:15378"/>
        <dbReference type="ChEBI" id="CHEBI:29985"/>
        <dbReference type="ChEBI" id="CHEBI:58278"/>
        <dbReference type="ChEBI" id="CHEBI:58359"/>
        <dbReference type="ChEBI" id="CHEBI:58475"/>
        <dbReference type="ChEBI" id="CHEBI:58525"/>
        <dbReference type="EC" id="4.3.2.10"/>
    </reaction>
</comment>
<comment type="pathway">
    <text>Amino-acid biosynthesis; L-histidine biosynthesis; L-histidine from 5-phospho-alpha-D-ribose 1-diphosphate: step 5/9.</text>
</comment>
<comment type="subunit">
    <text evidence="1">Heterodimer of HisH and HisF.</text>
</comment>
<comment type="subcellular location">
    <subcellularLocation>
        <location evidence="1">Cytoplasm</location>
    </subcellularLocation>
</comment>
<comment type="similarity">
    <text evidence="3">Belongs to the HisA/HisF family.</text>
</comment>
<organism>
    <name type="scientific">Listeria innocua serovar 6a (strain ATCC BAA-680 / CLIP 11262)</name>
    <dbReference type="NCBI Taxonomy" id="272626"/>
    <lineage>
        <taxon>Bacteria</taxon>
        <taxon>Bacillati</taxon>
        <taxon>Bacillota</taxon>
        <taxon>Bacilli</taxon>
        <taxon>Bacillales</taxon>
        <taxon>Listeriaceae</taxon>
        <taxon>Listeria</taxon>
    </lineage>
</organism>
<reference key="1">
    <citation type="journal article" date="2001" name="Science">
        <title>Comparative genomics of Listeria species.</title>
        <authorList>
            <person name="Glaser P."/>
            <person name="Frangeul L."/>
            <person name="Buchrieser C."/>
            <person name="Rusniok C."/>
            <person name="Amend A."/>
            <person name="Baquero F."/>
            <person name="Berche P."/>
            <person name="Bloecker H."/>
            <person name="Brandt P."/>
            <person name="Chakraborty T."/>
            <person name="Charbit A."/>
            <person name="Chetouani F."/>
            <person name="Couve E."/>
            <person name="de Daruvar A."/>
            <person name="Dehoux P."/>
            <person name="Domann E."/>
            <person name="Dominguez-Bernal G."/>
            <person name="Duchaud E."/>
            <person name="Durant L."/>
            <person name="Dussurget O."/>
            <person name="Entian K.-D."/>
            <person name="Fsihi H."/>
            <person name="Garcia-del Portillo F."/>
            <person name="Garrido P."/>
            <person name="Gautier L."/>
            <person name="Goebel W."/>
            <person name="Gomez-Lopez N."/>
            <person name="Hain T."/>
            <person name="Hauf J."/>
            <person name="Jackson D."/>
            <person name="Jones L.-M."/>
            <person name="Kaerst U."/>
            <person name="Kreft J."/>
            <person name="Kuhn M."/>
            <person name="Kunst F."/>
            <person name="Kurapkat G."/>
            <person name="Madueno E."/>
            <person name="Maitournam A."/>
            <person name="Mata Vicente J."/>
            <person name="Ng E."/>
            <person name="Nedjari H."/>
            <person name="Nordsiek G."/>
            <person name="Novella S."/>
            <person name="de Pablos B."/>
            <person name="Perez-Diaz J.-C."/>
            <person name="Purcell R."/>
            <person name="Remmel B."/>
            <person name="Rose M."/>
            <person name="Schlueter T."/>
            <person name="Simoes N."/>
            <person name="Tierrez A."/>
            <person name="Vazquez-Boland J.-A."/>
            <person name="Voss H."/>
            <person name="Wehland J."/>
            <person name="Cossart P."/>
        </authorList>
    </citation>
    <scope>NUCLEOTIDE SEQUENCE [LARGE SCALE GENOMIC DNA]</scope>
    <source>
        <strain>ATCC BAA-680 / CLIP 11262</strain>
    </source>
</reference>
<accession>Q92E88</accession>